<name>AK1A1_PIG</name>
<gene>
    <name type="primary">AKR1A1</name>
    <name evidence="9" type="synonym">ALR</name>
    <name type="synonym">ALR1</name>
</gene>
<comment type="function">
    <text evidence="2 3 6">Catalyzes the NADPH-dependent reduction of a wide variety of carbonyl-containing compounds to their corresponding alcohols. Displays enzymatic activity towards endogenous metabolites such as aromatic and aliphatic aldehydes, ketones, monosaccharides and bile acids, with a preference for negatively charged substrates, such as glucuronate and succinic semialdehyde (By similarity). Plays an important role in ascorbic acid biosynthesis by catalyzing the reduction of D-glucuronic acid and D-glucurono-gamma-lactone (By similarity). Functions as a detoxifiying enzyme by reducing a range of toxic aldehydes. Reduces methylglyoxal and 3-deoxyglucosone, which are present at elevated levels under hyperglycemic conditions and are cytotoxic. Involved also in the detoxification of lipid-derived aldehydes like acrolein (By similarity). Plays a role in the activation of procarcinogens, such as polycyclic aromatic hydrocarbon trans-dihydrodiols, and in the metabolism of various xenobiotics and drugs (By similarity). Also acts as an inhibitor of protein S-nitrosylation by mediating degradation of S-nitroso-coenzyme A (S-nitroso-CoA), a cofactor required to S-nitrosylate proteins (By similarity). S-nitroso-CoA reductase activity is involved in reprogramming intermediary metabolism in renal proximal tubules, notably by inhibiting protein S-nitrosylation of isoform 2 of PKM (PKM2) (By similarity). Also acts as a S-nitroso-glutathione reductase by catalyzing the NADPH-dependent reduction of S-nitrosoglutathione (By similarity). Displays no reductase activity towards retinoids (PubMed:12732097).</text>
</comment>
<comment type="catalytic activity">
    <reaction evidence="6">
        <text>a primary alcohol + NADP(+) = an aldehyde + NADPH + H(+)</text>
        <dbReference type="Rhea" id="RHEA:15937"/>
        <dbReference type="ChEBI" id="CHEBI:15378"/>
        <dbReference type="ChEBI" id="CHEBI:15734"/>
        <dbReference type="ChEBI" id="CHEBI:17478"/>
        <dbReference type="ChEBI" id="CHEBI:57783"/>
        <dbReference type="ChEBI" id="CHEBI:58349"/>
        <dbReference type="EC" id="1.1.1.2"/>
    </reaction>
</comment>
<comment type="catalytic activity">
    <reaction evidence="6">
        <text>glycerol + NADP(+) = D-glyceraldehyde + NADPH + H(+)</text>
        <dbReference type="Rhea" id="RHEA:23592"/>
        <dbReference type="ChEBI" id="CHEBI:15378"/>
        <dbReference type="ChEBI" id="CHEBI:17378"/>
        <dbReference type="ChEBI" id="CHEBI:17754"/>
        <dbReference type="ChEBI" id="CHEBI:57783"/>
        <dbReference type="ChEBI" id="CHEBI:58349"/>
        <dbReference type="EC" id="1.1.1.372"/>
    </reaction>
</comment>
<comment type="catalytic activity">
    <reaction evidence="6">
        <text>glycerol + NADP(+) = L-glyceraldehyde + NADPH + H(+)</text>
        <dbReference type="Rhea" id="RHEA:38111"/>
        <dbReference type="ChEBI" id="CHEBI:15378"/>
        <dbReference type="ChEBI" id="CHEBI:17754"/>
        <dbReference type="ChEBI" id="CHEBI:27975"/>
        <dbReference type="ChEBI" id="CHEBI:57783"/>
        <dbReference type="ChEBI" id="CHEBI:58349"/>
        <dbReference type="EC" id="1.1.1.372"/>
    </reaction>
</comment>
<comment type="catalytic activity">
    <reaction evidence="3">
        <text>L-gulonate + NADP(+) = aldehydo-D-glucuronate + NADPH + H(+)</text>
        <dbReference type="Rhea" id="RHEA:14909"/>
        <dbReference type="ChEBI" id="CHEBI:13115"/>
        <dbReference type="ChEBI" id="CHEBI:15378"/>
        <dbReference type="ChEBI" id="CHEBI:57783"/>
        <dbReference type="ChEBI" id="CHEBI:58349"/>
        <dbReference type="ChEBI" id="CHEBI:142686"/>
        <dbReference type="EC" id="1.1.1.19"/>
    </reaction>
</comment>
<comment type="catalytic activity">
    <reaction evidence="3">
        <text>L-gulono-1,4-lactone + NADP(+) = D-glucurono-3,6-lactone + NADPH + H(+)</text>
        <dbReference type="Rhea" id="RHEA:18925"/>
        <dbReference type="ChEBI" id="CHEBI:15378"/>
        <dbReference type="ChEBI" id="CHEBI:17587"/>
        <dbReference type="ChEBI" id="CHEBI:18268"/>
        <dbReference type="ChEBI" id="CHEBI:57783"/>
        <dbReference type="ChEBI" id="CHEBI:58349"/>
        <dbReference type="EC" id="1.1.1.20"/>
    </reaction>
</comment>
<comment type="catalytic activity">
    <reaction evidence="3">
        <text>allyl alcohol + NADP(+) = acrolein + NADPH + H(+)</text>
        <dbReference type="Rhea" id="RHEA:12168"/>
        <dbReference type="ChEBI" id="CHEBI:15368"/>
        <dbReference type="ChEBI" id="CHEBI:15378"/>
        <dbReference type="ChEBI" id="CHEBI:16605"/>
        <dbReference type="ChEBI" id="CHEBI:57783"/>
        <dbReference type="ChEBI" id="CHEBI:58349"/>
        <dbReference type="EC" id="1.1.1.54"/>
    </reaction>
</comment>
<comment type="catalytic activity">
    <reaction evidence="3">
        <text>hydroxyacetone + NADP(+) = methylglyoxal + NADPH + H(+)</text>
        <dbReference type="Rhea" id="RHEA:27986"/>
        <dbReference type="ChEBI" id="CHEBI:15378"/>
        <dbReference type="ChEBI" id="CHEBI:17158"/>
        <dbReference type="ChEBI" id="CHEBI:27957"/>
        <dbReference type="ChEBI" id="CHEBI:57783"/>
        <dbReference type="ChEBI" id="CHEBI:58349"/>
    </reaction>
</comment>
<comment type="catalytic activity">
    <reaction evidence="3">
        <text>3-deoxyfructose + NADP(+) = 3-deoxyglucosone + NADPH + H(+)</text>
        <dbReference type="Rhea" id="RHEA:58668"/>
        <dbReference type="ChEBI" id="CHEBI:15378"/>
        <dbReference type="ChEBI" id="CHEBI:57783"/>
        <dbReference type="ChEBI" id="CHEBI:58349"/>
        <dbReference type="ChEBI" id="CHEBI:60777"/>
        <dbReference type="ChEBI" id="CHEBI:142685"/>
    </reaction>
</comment>
<comment type="catalytic activity">
    <reaction evidence="3">
        <text>(R)-mevalonate + NADP(+) = (R)-mevaldate + NADPH + H(+)</text>
        <dbReference type="Rhea" id="RHEA:20193"/>
        <dbReference type="ChEBI" id="CHEBI:15378"/>
        <dbReference type="ChEBI" id="CHEBI:36464"/>
        <dbReference type="ChEBI" id="CHEBI:57783"/>
        <dbReference type="ChEBI" id="CHEBI:58349"/>
        <dbReference type="ChEBI" id="CHEBI:195523"/>
    </reaction>
</comment>
<comment type="catalytic activity">
    <reaction evidence="6">
        <text>pyridine 3-methanol + NADP(+) = pyridine-3-carbaldehyde + NADPH + H(+)</text>
        <dbReference type="Rhea" id="RHEA:58776"/>
        <dbReference type="ChEBI" id="CHEBI:15378"/>
        <dbReference type="ChEBI" id="CHEBI:28345"/>
        <dbReference type="ChEBI" id="CHEBI:45213"/>
        <dbReference type="ChEBI" id="CHEBI:57783"/>
        <dbReference type="ChEBI" id="CHEBI:58349"/>
    </reaction>
</comment>
<comment type="catalytic activity">
    <reaction evidence="2">
        <text>S-nitroso-CoA + NADPH + H(+) = sulfinamide-CoA + NADP(+)</text>
        <dbReference type="Rhea" id="RHEA:78375"/>
        <dbReference type="ChEBI" id="CHEBI:15378"/>
        <dbReference type="ChEBI" id="CHEBI:57783"/>
        <dbReference type="ChEBI" id="CHEBI:58349"/>
        <dbReference type="ChEBI" id="CHEBI:145546"/>
        <dbReference type="ChEBI" id="CHEBI:145548"/>
    </reaction>
    <physiologicalReaction direction="left-to-right" evidence="2">
        <dbReference type="Rhea" id="RHEA:78376"/>
    </physiologicalReaction>
</comment>
<comment type="catalytic activity">
    <reaction evidence="4">
        <text>S-nitrosoglutathione + NADPH + H(+) = S-(hydroxysulfenamide)glutathione + NADP(+)</text>
        <dbReference type="Rhea" id="RHEA:63500"/>
        <dbReference type="ChEBI" id="CHEBI:15378"/>
        <dbReference type="ChEBI" id="CHEBI:57783"/>
        <dbReference type="ChEBI" id="CHEBI:58349"/>
        <dbReference type="ChEBI" id="CHEBI:145544"/>
        <dbReference type="ChEBI" id="CHEBI:229723"/>
    </reaction>
</comment>
<comment type="biophysicochemical properties">
    <kinetics>
        <KM evidence="6">700 uM for pyridine-3-carbaldehyde</KM>
        <KM evidence="6">4600 uM for D,L-glyceraldehyde</KM>
        <text evidence="6">kcat is 11000 min(-1) for pyridine-3-carbaldehyde as substrate. kcat is 2500 min(-1) for D,L-glyceraldehyde as substrate.</text>
    </kinetics>
</comment>
<comment type="subunit">
    <text evidence="8">Monomer.</text>
</comment>
<comment type="subcellular location">
    <subcellularLocation>
        <location evidence="4">Cytoplasm</location>
        <location evidence="4">Cytosol</location>
    </subcellularLocation>
    <subcellularLocation>
        <location evidence="4">Apical cell membrane</location>
    </subcellularLocation>
</comment>
<comment type="similarity">
    <text evidence="10">Belongs to the aldo/keto reductase family.</text>
</comment>
<accession>P50578</accession>
<accession>I3L929</accession>
<dbReference type="EC" id="1.1.1.2" evidence="6"/>
<dbReference type="EC" id="1.1.1.372" evidence="6"/>
<dbReference type="EC" id="1.1.1.54" evidence="3"/>
<dbReference type="EC" id="1.1.1.19" evidence="3"/>
<dbReference type="EC" id="1.1.1.20" evidence="3"/>
<dbReference type="EC" id="1.6.-.-" evidence="2"/>
<dbReference type="EMBL" id="U46064">
    <property type="protein sequence ID" value="AAB60266.1"/>
    <property type="molecule type" value="mRNA"/>
</dbReference>
<dbReference type="EMBL" id="AEMK02000049">
    <property type="status" value="NOT_ANNOTATED_CDS"/>
    <property type="molecule type" value="Genomic_DNA"/>
</dbReference>
<dbReference type="RefSeq" id="NP_999055.1">
    <property type="nucleotide sequence ID" value="NM_213890.1"/>
</dbReference>
<dbReference type="RefSeq" id="XP_020949154.1">
    <property type="nucleotide sequence ID" value="XM_021093495.1"/>
</dbReference>
<dbReference type="RefSeq" id="XP_020949156.1">
    <property type="nucleotide sequence ID" value="XM_021093497.1"/>
</dbReference>
<dbReference type="RefSeq" id="XP_020949157.1">
    <property type="nucleotide sequence ID" value="XM_021093498.1"/>
</dbReference>
<dbReference type="PDB" id="1AE4">
    <property type="method" value="X-ray"/>
    <property type="resolution" value="2.40 A"/>
    <property type="chains" value="A=1-325"/>
</dbReference>
<dbReference type="PDB" id="1CWN">
    <property type="method" value="X-ray"/>
    <property type="resolution" value="2.00 A"/>
    <property type="chains" value="A=2-325"/>
</dbReference>
<dbReference type="PDB" id="1HQT">
    <property type="method" value="X-ray"/>
    <property type="resolution" value="2.20 A"/>
    <property type="chains" value="A=1-325"/>
</dbReference>
<dbReference type="PDB" id="3CV7">
    <property type="method" value="X-ray"/>
    <property type="resolution" value="2.41 A"/>
    <property type="chains" value="A=1-325"/>
</dbReference>
<dbReference type="PDB" id="3FX4">
    <property type="method" value="X-ray"/>
    <property type="resolution" value="1.99 A"/>
    <property type="chains" value="A=1-325"/>
</dbReference>
<dbReference type="PDB" id="3H4G">
    <property type="method" value="X-ray"/>
    <property type="resolution" value="1.85 A"/>
    <property type="chains" value="A=1-325"/>
</dbReference>
<dbReference type="PDBsum" id="1AE4"/>
<dbReference type="PDBsum" id="1CWN"/>
<dbReference type="PDBsum" id="1HQT"/>
<dbReference type="PDBsum" id="3CV7"/>
<dbReference type="PDBsum" id="3FX4"/>
<dbReference type="PDBsum" id="3H4G"/>
<dbReference type="SMR" id="P50578"/>
<dbReference type="FunCoup" id="P50578">
    <property type="interactions" value="1330"/>
</dbReference>
<dbReference type="STRING" id="9823.ENSSSCP00000057347"/>
<dbReference type="BindingDB" id="P50578"/>
<dbReference type="ChEMBL" id="CHEMBL4049"/>
<dbReference type="DrugCentral" id="P50578"/>
<dbReference type="PaxDb" id="9823-ENSSSCP00000020540"/>
<dbReference type="PeptideAtlas" id="P50578"/>
<dbReference type="GeneID" id="396924"/>
<dbReference type="KEGG" id="ssc:396924"/>
<dbReference type="CTD" id="10327"/>
<dbReference type="eggNOG" id="KOG1577">
    <property type="taxonomic scope" value="Eukaryota"/>
</dbReference>
<dbReference type="HOGENOM" id="CLU_023205_0_0_1"/>
<dbReference type="InParanoid" id="P50578"/>
<dbReference type="OrthoDB" id="416253at2759"/>
<dbReference type="TreeFam" id="TF106492"/>
<dbReference type="BioCyc" id="MetaCyc:MONOMER-14995"/>
<dbReference type="BRENDA" id="1.1.1.2">
    <property type="organism ID" value="6170"/>
</dbReference>
<dbReference type="SABIO-RK" id="P50578"/>
<dbReference type="EvolutionaryTrace" id="P50578"/>
<dbReference type="PRO" id="PR:P50578"/>
<dbReference type="Proteomes" id="UP000008227">
    <property type="component" value="Unplaced"/>
</dbReference>
<dbReference type="Proteomes" id="UP000314985">
    <property type="component" value="Unplaced"/>
</dbReference>
<dbReference type="Proteomes" id="UP000694570">
    <property type="component" value="Unplaced"/>
</dbReference>
<dbReference type="Proteomes" id="UP000694571">
    <property type="component" value="Unplaced"/>
</dbReference>
<dbReference type="Proteomes" id="UP000694720">
    <property type="component" value="Unplaced"/>
</dbReference>
<dbReference type="Proteomes" id="UP000694722">
    <property type="component" value="Unplaced"/>
</dbReference>
<dbReference type="Proteomes" id="UP000694723">
    <property type="component" value="Unplaced"/>
</dbReference>
<dbReference type="Proteomes" id="UP000694724">
    <property type="component" value="Unplaced"/>
</dbReference>
<dbReference type="Proteomes" id="UP000694725">
    <property type="component" value="Unplaced"/>
</dbReference>
<dbReference type="Proteomes" id="UP000694726">
    <property type="component" value="Unplaced"/>
</dbReference>
<dbReference type="Proteomes" id="UP000694727">
    <property type="component" value="Unplaced"/>
</dbReference>
<dbReference type="Proteomes" id="UP000694728">
    <property type="component" value="Unplaced"/>
</dbReference>
<dbReference type="GO" id="GO:0016324">
    <property type="term" value="C:apical plasma membrane"/>
    <property type="evidence" value="ECO:0000250"/>
    <property type="project" value="UniProtKB"/>
</dbReference>
<dbReference type="GO" id="GO:0005829">
    <property type="term" value="C:cytosol"/>
    <property type="evidence" value="ECO:0000250"/>
    <property type="project" value="UniProtKB"/>
</dbReference>
<dbReference type="GO" id="GO:0004032">
    <property type="term" value="F:aldose reductase (NADPH) activity"/>
    <property type="evidence" value="ECO:0000318"/>
    <property type="project" value="GO_Central"/>
</dbReference>
<dbReference type="GO" id="GO:0047655">
    <property type="term" value="F:allyl-alcohol dehydrogenase activity"/>
    <property type="evidence" value="ECO:0007669"/>
    <property type="project" value="UniProtKB-EC"/>
</dbReference>
<dbReference type="GO" id="GO:0047941">
    <property type="term" value="F:glucuronolactone reductase activity"/>
    <property type="evidence" value="ECO:0000250"/>
    <property type="project" value="UniProtKB"/>
</dbReference>
<dbReference type="GO" id="GO:0047956">
    <property type="term" value="F:glycerol dehydrogenase (NADP+) activity"/>
    <property type="evidence" value="ECO:0007669"/>
    <property type="project" value="RHEA"/>
</dbReference>
<dbReference type="GO" id="GO:0047939">
    <property type="term" value="F:L-glucuronate reductase activity"/>
    <property type="evidence" value="ECO:0000250"/>
    <property type="project" value="UniProtKB"/>
</dbReference>
<dbReference type="GO" id="GO:1990002">
    <property type="term" value="F:methylglyoxal reductase (NADPH) (acetol producing) activity"/>
    <property type="evidence" value="ECO:0007669"/>
    <property type="project" value="RHEA"/>
</dbReference>
<dbReference type="GO" id="GO:0160163">
    <property type="term" value="F:S-nitrosoglutathione reductase (NADPH) activity"/>
    <property type="evidence" value="ECO:0007669"/>
    <property type="project" value="RHEA"/>
</dbReference>
<dbReference type="GO" id="GO:0046185">
    <property type="term" value="P:aldehyde catabolic process"/>
    <property type="evidence" value="ECO:0007669"/>
    <property type="project" value="InterPro"/>
</dbReference>
<dbReference type="GO" id="GO:0110095">
    <property type="term" value="P:cellular detoxification of aldehyde"/>
    <property type="evidence" value="ECO:0000250"/>
    <property type="project" value="UniProtKB"/>
</dbReference>
<dbReference type="GO" id="GO:0042840">
    <property type="term" value="P:D-glucuronate catabolic process"/>
    <property type="evidence" value="ECO:0000250"/>
    <property type="project" value="UniProtKB"/>
</dbReference>
<dbReference type="GO" id="GO:0019853">
    <property type="term" value="P:L-ascorbic acid biosynthetic process"/>
    <property type="evidence" value="ECO:0000250"/>
    <property type="project" value="UniProtKB"/>
</dbReference>
<dbReference type="GO" id="GO:0006629">
    <property type="term" value="P:lipid metabolic process"/>
    <property type="evidence" value="ECO:0007669"/>
    <property type="project" value="UniProtKB-KW"/>
</dbReference>
<dbReference type="CDD" id="cd19106">
    <property type="entry name" value="AKR_AKR1A1-4"/>
    <property type="match status" value="1"/>
</dbReference>
<dbReference type="FunFam" id="3.20.20.100:FF:000006">
    <property type="entry name" value="Aldo-keto reductase family 1 member A1"/>
    <property type="match status" value="1"/>
</dbReference>
<dbReference type="Gene3D" id="3.20.20.100">
    <property type="entry name" value="NADP-dependent oxidoreductase domain"/>
    <property type="match status" value="1"/>
</dbReference>
<dbReference type="InterPro" id="IPR020471">
    <property type="entry name" value="AKR"/>
</dbReference>
<dbReference type="InterPro" id="IPR044481">
    <property type="entry name" value="AKR1A"/>
</dbReference>
<dbReference type="InterPro" id="IPR018170">
    <property type="entry name" value="Aldo/ket_reductase_CS"/>
</dbReference>
<dbReference type="InterPro" id="IPR023210">
    <property type="entry name" value="NADP_OxRdtase_dom"/>
</dbReference>
<dbReference type="InterPro" id="IPR036812">
    <property type="entry name" value="NADP_OxRdtase_dom_sf"/>
</dbReference>
<dbReference type="PANTHER" id="PTHR11732">
    <property type="entry name" value="ALDO/KETO REDUCTASE"/>
    <property type="match status" value="1"/>
</dbReference>
<dbReference type="Pfam" id="PF00248">
    <property type="entry name" value="Aldo_ket_red"/>
    <property type="match status" value="1"/>
</dbReference>
<dbReference type="PIRSF" id="PIRSF000097">
    <property type="entry name" value="AKR"/>
    <property type="match status" value="1"/>
</dbReference>
<dbReference type="PRINTS" id="PR00069">
    <property type="entry name" value="ALDKETRDTASE"/>
</dbReference>
<dbReference type="SUPFAM" id="SSF51430">
    <property type="entry name" value="NAD(P)-linked oxidoreductase"/>
    <property type="match status" value="1"/>
</dbReference>
<dbReference type="PROSITE" id="PS00798">
    <property type="entry name" value="ALDOKETO_REDUCTASE_1"/>
    <property type="match status" value="1"/>
</dbReference>
<dbReference type="PROSITE" id="PS00062">
    <property type="entry name" value="ALDOKETO_REDUCTASE_2"/>
    <property type="match status" value="1"/>
</dbReference>
<dbReference type="PROSITE" id="PS00063">
    <property type="entry name" value="ALDOKETO_REDUCTASE_3"/>
    <property type="match status" value="1"/>
</dbReference>
<organism>
    <name type="scientific">Sus scrofa</name>
    <name type="common">Pig</name>
    <dbReference type="NCBI Taxonomy" id="9823"/>
    <lineage>
        <taxon>Eukaryota</taxon>
        <taxon>Metazoa</taxon>
        <taxon>Chordata</taxon>
        <taxon>Craniata</taxon>
        <taxon>Vertebrata</taxon>
        <taxon>Euteleostomi</taxon>
        <taxon>Mammalia</taxon>
        <taxon>Eutheria</taxon>
        <taxon>Laurasiatheria</taxon>
        <taxon>Artiodactyla</taxon>
        <taxon>Suina</taxon>
        <taxon>Suidae</taxon>
        <taxon>Sus</taxon>
    </lineage>
</organism>
<sequence length="325" mass="36582">MAASCVLLHTGQKMPLIGLGTWKSEPGQVKAAIKYALTVGYRHIDCAAIYGNELEIGEALQETVGPGKAVPREELFVTSKLWNTKHHPEDVEPALRKTLADLQLEYLDLYLMHWPYAFERGDNPFPKNADGTIRYDATHYKDTWKALEALVAKGLVRALGLSNFSSRQIDDVLSVASVRPAVLQVECHPYLAQNELIAHCQARGLEVTAYSPLGSSDRAWRDPNEPVLLEEPVVQALAEKYNRSPAQILLRWQVQRKVICIPKSVTPSRILQNIQVFDFTFSPEEMKQLDALNKNLRFIVPMLTVDGKRVPRDAGHPLYPFNDPY</sequence>
<proteinExistence type="evidence at protein level"/>
<evidence type="ECO:0000250" key="1">
    <source>
        <dbReference type="UniProtKB" id="O60218"/>
    </source>
</evidence>
<evidence type="ECO:0000250" key="2">
    <source>
        <dbReference type="UniProtKB" id="P14550"/>
    </source>
</evidence>
<evidence type="ECO:0000250" key="3">
    <source>
        <dbReference type="UniProtKB" id="P51635"/>
    </source>
</evidence>
<evidence type="ECO:0000250" key="4">
    <source>
        <dbReference type="UniProtKB" id="Q9JII6"/>
    </source>
</evidence>
<evidence type="ECO:0000269" key="5">
    <source>
    </source>
</evidence>
<evidence type="ECO:0000269" key="6">
    <source>
    </source>
</evidence>
<evidence type="ECO:0000269" key="7">
    <source>
    </source>
</evidence>
<evidence type="ECO:0000269" key="8">
    <source>
    </source>
</evidence>
<evidence type="ECO:0000303" key="9">
    <source>
    </source>
</evidence>
<evidence type="ECO:0000305" key="10"/>
<evidence type="ECO:0007744" key="11">
    <source>
        <dbReference type="PDB" id="1AE4"/>
    </source>
</evidence>
<evidence type="ECO:0007744" key="12">
    <source>
        <dbReference type="PDB" id="1HQT"/>
    </source>
</evidence>
<evidence type="ECO:0007744" key="13">
    <source>
        <dbReference type="PDB" id="3CV7"/>
    </source>
</evidence>
<evidence type="ECO:0007829" key="14">
    <source>
        <dbReference type="PDB" id="3CV7"/>
    </source>
</evidence>
<evidence type="ECO:0007829" key="15">
    <source>
        <dbReference type="PDB" id="3FX4"/>
    </source>
</evidence>
<evidence type="ECO:0007829" key="16">
    <source>
        <dbReference type="PDB" id="3H4G"/>
    </source>
</evidence>
<keyword id="KW-0002">3D-structure</keyword>
<keyword id="KW-0007">Acetylation</keyword>
<keyword id="KW-1003">Cell membrane</keyword>
<keyword id="KW-0963">Cytoplasm</keyword>
<keyword id="KW-0443">Lipid metabolism</keyword>
<keyword id="KW-0472">Membrane</keyword>
<keyword id="KW-0521">NADP</keyword>
<keyword id="KW-0560">Oxidoreductase</keyword>
<keyword id="KW-0597">Phosphoprotein</keyword>
<keyword id="KW-1185">Reference proteome</keyword>
<reference key="1">
    <citation type="journal article" date="1995" name="Adv. Exp. Med. Biol.">
        <title>Structure and mechanism of aldehyde reductase.</title>
        <authorList>
            <person name="Flynn T.G."/>
            <person name="Green N.C."/>
            <person name="Bhatia M.B."/>
            <person name="El-Kabbani O."/>
        </authorList>
    </citation>
    <scope>NUCLEOTIDE SEQUENCE [MRNA]</scope>
    <source>
        <tissue>Brain</tissue>
    </source>
</reference>
<reference key="2">
    <citation type="submission" date="2009-11" db="EMBL/GenBank/DDBJ databases">
        <authorList>
            <consortium name="Porcine genome sequencing project"/>
        </authorList>
    </citation>
    <scope>NUCLEOTIDE SEQUENCE [LARGE SCALE GENOMIC DNA]</scope>
    <source>
        <strain>Duroc</strain>
    </source>
</reference>
<reference key="3">
    <citation type="journal article" date="1995" name="Nat. Struct. Biol.">
        <title>Structure of porcine aldehyde reductase holoenzyme.</title>
        <authorList>
            <person name="el-Kabbani O."/>
            <person name="Judge K."/>
            <person name="Ginell S.L."/>
            <person name="Myles D.A."/>
            <person name="DeLucas L.J."/>
            <person name="Flynn T.G."/>
        </authorList>
    </citation>
    <scope>X-RAY CRYSTALLOGRAPHY (2.4 ANGSTROMS)</scope>
</reference>
<reference key="4">
    <citation type="journal article" date="2003" name="Biochem. J.">
        <title>Human aldose reductase and human small intestine aldose reductase are efficient retinal reductases: consequences for retinoid metabolism.</title>
        <authorList>
            <person name="Crosas B."/>
            <person name="Hyndman D.J."/>
            <person name="Gallego O."/>
            <person name="Martras S."/>
            <person name="Pares X."/>
            <person name="Flynn T.G."/>
            <person name="Farres J."/>
        </authorList>
    </citation>
    <scope>FUNCTION</scope>
    <scope>BIOPHYSICOCHEMICAL PROPERTIES</scope>
    <scope>CATALYTIC ACTIVITY</scope>
</reference>
<reference evidence="11" key="5">
    <citation type="journal article" date="1997" name="Proteins">
        <title>Studies on the inhibitor-binding site of porcine aldehyde reductase: crystal structure of the holoenzyme-inhibitor ternary complex.</title>
        <authorList>
            <person name="El-Kabbani O."/>
            <person name="Carper D.A."/>
            <person name="McGowan M.H."/>
            <person name="Devedjiev Y."/>
            <person name="Rees-Milton K.J."/>
            <person name="Flynn T.G."/>
        </authorList>
    </citation>
    <scope>X-RAY CRYSTALLOGRAPHY (2.4 ANGSTROMS)</scope>
    <scope>SUBUNIT</scope>
</reference>
<reference evidence="12" key="6">
    <citation type="journal article" date="2001" name="Chem. Biol. Interact.">
        <title>The crystal structure of an aldehyde reductase Y50F mutant-NADP complex and its implications for substrate binding.</title>
        <authorList>
            <person name="Ye Q."/>
            <person name="Hyndman D."/>
            <person name="Green N.C."/>
            <person name="Li L."/>
            <person name="Jia Z."/>
            <person name="Flynn T.G."/>
        </authorList>
    </citation>
    <scope>X-RAY CRYSTALLOGRAPHY (2.20 ANGSTROMS) IN COMPLEX WITH NADP(+)</scope>
    <scope>FUNCTION</scope>
    <scope>CATALYTIC ACTIVITY</scope>
    <scope>ACTIVE SITE</scope>
    <scope>MUTAGENESIS OF TYR-50</scope>
</reference>
<feature type="initiator methionine" description="Removed" evidence="2">
    <location>
        <position position="1"/>
    </location>
</feature>
<feature type="chain" id="PRO_0000124619" description="Aldo-keto reductase family 1 member A1">
    <location>
        <begin position="2"/>
        <end position="325"/>
    </location>
</feature>
<feature type="active site" description="Proton donor" evidence="5 7">
    <location>
        <position position="50"/>
    </location>
</feature>
<feature type="binding site" evidence="1">
    <location>
        <begin position="11"/>
        <end position="20"/>
    </location>
    <ligand>
        <name>NADP(+)</name>
        <dbReference type="ChEBI" id="CHEBI:58349"/>
    </ligand>
</feature>
<feature type="binding site" evidence="5 12">
    <location>
        <position position="21"/>
    </location>
    <ligand>
        <name>NADP(+)</name>
        <dbReference type="ChEBI" id="CHEBI:58349"/>
    </ligand>
</feature>
<feature type="binding site" evidence="5 12">
    <location>
        <position position="22"/>
    </location>
    <ligand>
        <name>NADP(+)</name>
        <dbReference type="ChEBI" id="CHEBI:58349"/>
    </ligand>
</feature>
<feature type="binding site" evidence="5 12">
    <location>
        <position position="45"/>
    </location>
    <ligand>
        <name>NADP(+)</name>
        <dbReference type="ChEBI" id="CHEBI:58349"/>
    </ligand>
</feature>
<feature type="binding site" evidence="5 12">
    <location>
        <position position="162"/>
    </location>
    <ligand>
        <name>NADP(+)</name>
        <dbReference type="ChEBI" id="CHEBI:58349"/>
    </ligand>
</feature>
<feature type="binding site" evidence="5 12">
    <location>
        <position position="163"/>
    </location>
    <ligand>
        <name>NADP(+)</name>
        <dbReference type="ChEBI" id="CHEBI:58349"/>
    </ligand>
</feature>
<feature type="binding site" evidence="5 12">
    <location>
        <position position="211"/>
    </location>
    <ligand>
        <name>NADP(+)</name>
        <dbReference type="ChEBI" id="CHEBI:58349"/>
    </ligand>
</feature>
<feature type="binding site" evidence="5 12">
    <location>
        <position position="213"/>
    </location>
    <ligand>
        <name>NADP(+)</name>
        <dbReference type="ChEBI" id="CHEBI:58349"/>
    </ligand>
</feature>
<feature type="binding site" evidence="5 12">
    <location>
        <position position="215"/>
    </location>
    <ligand>
        <name>NADP(+)</name>
        <dbReference type="ChEBI" id="CHEBI:58349"/>
    </ligand>
</feature>
<feature type="binding site" evidence="5 12">
    <location>
        <position position="216"/>
    </location>
    <ligand>
        <name>NADP(+)</name>
        <dbReference type="ChEBI" id="CHEBI:58349"/>
    </ligand>
</feature>
<feature type="binding site" evidence="5 12">
    <location>
        <position position="263"/>
    </location>
    <ligand>
        <name>NADP(+)</name>
        <dbReference type="ChEBI" id="CHEBI:58349"/>
    </ligand>
</feature>
<feature type="binding site" evidence="5 12">
    <location>
        <position position="264"/>
    </location>
    <ligand>
        <name>NADP(+)</name>
        <dbReference type="ChEBI" id="CHEBI:58349"/>
    </ligand>
</feature>
<feature type="binding site" evidence="5 12">
    <location>
        <position position="265"/>
    </location>
    <ligand>
        <name>NADP(+)</name>
        <dbReference type="ChEBI" id="CHEBI:58349"/>
    </ligand>
</feature>
<feature type="binding site" evidence="5 12">
    <location>
        <position position="266"/>
    </location>
    <ligand>
        <name>NADP(+)</name>
        <dbReference type="ChEBI" id="CHEBI:58349"/>
    </ligand>
</feature>
<feature type="binding site" evidence="5 12">
    <location>
        <position position="269"/>
    </location>
    <ligand>
        <name>NADP(+)</name>
        <dbReference type="ChEBI" id="CHEBI:58349"/>
    </ligand>
</feature>
<feature type="binding site" evidence="5 13">
    <location>
        <position position="272"/>
    </location>
    <ligand>
        <name>NADP(+)</name>
        <dbReference type="ChEBI" id="CHEBI:58349"/>
    </ligand>
</feature>
<feature type="binding site" evidence="5 12">
    <location>
        <position position="273"/>
    </location>
    <ligand>
        <name>NADP(+)</name>
        <dbReference type="ChEBI" id="CHEBI:58349"/>
    </ligand>
</feature>
<feature type="site" description="Lowers pKa of active site Tyr" evidence="2">
    <location>
        <position position="80"/>
    </location>
</feature>
<feature type="modified residue" description="N-acetylalanine" evidence="2">
    <location>
        <position position="2"/>
    </location>
</feature>
<feature type="modified residue" description="Phosphoserine" evidence="3">
    <location>
        <position position="4"/>
    </location>
</feature>
<feature type="modified residue" description="N6-acetyllysine; alternate" evidence="4">
    <location>
        <position position="127"/>
    </location>
</feature>
<feature type="modified residue" description="N6-succinyllysine; alternate" evidence="4">
    <location>
        <position position="127"/>
    </location>
</feature>
<feature type="modified residue" description="N6-succinyllysine" evidence="4">
    <location>
        <position position="145"/>
    </location>
</feature>
<feature type="modified residue" description="Phosphoserine" evidence="2">
    <location>
        <position position="211"/>
    </location>
</feature>
<feature type="mutagenesis site" description="Abolished aldo-keto reductase activity." evidence="5">
    <original>Y</original>
    <variation>F</variation>
    <location>
        <position position="50"/>
    </location>
</feature>
<feature type="sequence conflict" description="In Ref. 1; AAB60266." ref="1">
    <original>Q</original>
    <variation>T</variation>
    <location>
        <position position="61"/>
    </location>
</feature>
<feature type="sequence conflict" description="In Ref. 1; AAB60266." ref="1">
    <original>L</original>
    <variation>P</variation>
    <location>
        <position position="271"/>
    </location>
</feature>
<feature type="strand" evidence="16">
    <location>
        <begin position="5"/>
        <end position="7"/>
    </location>
</feature>
<feature type="strand" evidence="16">
    <location>
        <begin position="13"/>
        <end position="17"/>
    </location>
</feature>
<feature type="turn" evidence="16">
    <location>
        <begin position="26"/>
        <end position="28"/>
    </location>
</feature>
<feature type="helix" evidence="16">
    <location>
        <begin position="29"/>
        <end position="38"/>
    </location>
</feature>
<feature type="strand" evidence="16">
    <location>
        <begin position="43"/>
        <end position="45"/>
    </location>
</feature>
<feature type="helix" evidence="16">
    <location>
        <begin position="48"/>
        <end position="50"/>
    </location>
</feature>
<feature type="helix" evidence="16">
    <location>
        <begin position="53"/>
        <end position="63"/>
    </location>
</feature>
<feature type="strand" evidence="16">
    <location>
        <begin position="68"/>
        <end position="70"/>
    </location>
</feature>
<feature type="helix" evidence="16">
    <location>
        <begin position="72"/>
        <end position="74"/>
    </location>
</feature>
<feature type="strand" evidence="16">
    <location>
        <begin position="76"/>
        <end position="81"/>
    </location>
</feature>
<feature type="helix" evidence="16">
    <location>
        <begin position="83"/>
        <end position="85"/>
    </location>
</feature>
<feature type="helix" evidence="16">
    <location>
        <begin position="88"/>
        <end position="102"/>
    </location>
</feature>
<feature type="strand" evidence="16">
    <location>
        <begin position="107"/>
        <end position="113"/>
    </location>
</feature>
<feature type="strand" evidence="16">
    <location>
        <begin position="115"/>
        <end position="118"/>
    </location>
</feature>
<feature type="strand" evidence="16">
    <location>
        <begin position="120"/>
        <end position="122"/>
    </location>
</feature>
<feature type="strand" evidence="15">
    <location>
        <begin position="131"/>
        <end position="133"/>
    </location>
</feature>
<feature type="helix" evidence="16">
    <location>
        <begin position="140"/>
        <end position="152"/>
    </location>
</feature>
<feature type="strand" evidence="16">
    <location>
        <begin position="155"/>
        <end position="163"/>
    </location>
</feature>
<feature type="helix" evidence="16">
    <location>
        <begin position="166"/>
        <end position="173"/>
    </location>
</feature>
<feature type="strand" evidence="16">
    <location>
        <begin position="182"/>
        <end position="186"/>
    </location>
</feature>
<feature type="helix" evidence="16">
    <location>
        <begin position="194"/>
        <end position="203"/>
    </location>
</feature>
<feature type="strand" evidence="16">
    <location>
        <begin position="206"/>
        <end position="211"/>
    </location>
</feature>
<feature type="turn" evidence="14">
    <location>
        <begin position="212"/>
        <end position="217"/>
    </location>
</feature>
<feature type="helix" evidence="16">
    <location>
        <begin position="228"/>
        <end position="230"/>
    </location>
</feature>
<feature type="helix" evidence="16">
    <location>
        <begin position="232"/>
        <end position="241"/>
    </location>
</feature>
<feature type="helix" evidence="16">
    <location>
        <begin position="245"/>
        <end position="255"/>
    </location>
</feature>
<feature type="helix" evidence="16">
    <location>
        <begin position="267"/>
        <end position="274"/>
    </location>
</feature>
<feature type="helix" evidence="16">
    <location>
        <begin position="283"/>
        <end position="290"/>
    </location>
</feature>
<feature type="strand" evidence="15">
    <location>
        <begin position="302"/>
        <end position="305"/>
    </location>
</feature>
<feature type="strand" evidence="16">
    <location>
        <begin position="311"/>
        <end position="313"/>
    </location>
</feature>
<feature type="helix" evidence="15">
    <location>
        <begin position="320"/>
        <end position="322"/>
    </location>
</feature>
<protein>
    <recommendedName>
        <fullName>Aldo-keto reductase family 1 member A1</fullName>
        <ecNumber evidence="6">1.1.1.2</ecNumber>
        <ecNumber evidence="6">1.1.1.372</ecNumber>
        <ecNumber evidence="3">1.1.1.54</ecNumber>
    </recommendedName>
    <alternativeName>
        <fullName>Alcohol dehydrogenase [NADP(+)]</fullName>
    </alternativeName>
    <alternativeName>
        <fullName>Aldehyde reductase</fullName>
    </alternativeName>
    <alternativeName>
        <fullName evidence="3">Glucuronate reductase</fullName>
        <ecNumber evidence="3">1.1.1.19</ecNumber>
    </alternativeName>
    <alternativeName>
        <fullName evidence="3">Glucuronolactone reductase</fullName>
        <ecNumber evidence="3">1.1.1.20</ecNumber>
    </alternativeName>
    <alternativeName>
        <fullName evidence="10">S-nitroso-CoA reductase</fullName>
        <shortName evidence="10">ScorR</shortName>
        <ecNumber evidence="2">1.6.-.-</ecNumber>
    </alternativeName>
</protein>